<name>FES1_KLULA</name>
<comment type="function">
    <text evidence="1">Functions as a nucleotide exchange factor (NEF) for Hsp70 chaperones which accelerates the release of ADP. Required for fully efficient Hsp70-mediated folding of proteins (By similarity).</text>
</comment>
<comment type="subcellular location">
    <subcellularLocation>
        <location evidence="1">Cytoplasm</location>
    </subcellularLocation>
</comment>
<comment type="similarity">
    <text evidence="2">Belongs to the FES1 family.</text>
</comment>
<evidence type="ECO:0000250" key="1"/>
<evidence type="ECO:0000305" key="2"/>
<protein>
    <recommendedName>
        <fullName>Hsp70 nucleotide exchange factor FES1</fullName>
    </recommendedName>
</protein>
<proteinExistence type="inferred from homology"/>
<feature type="chain" id="PRO_0000285396" description="Hsp70 nucleotide exchange factor FES1">
    <location>
        <begin position="1"/>
        <end position="289"/>
    </location>
</feature>
<feature type="repeat" description="ARM 1">
    <location>
        <begin position="13"/>
        <end position="56"/>
    </location>
</feature>
<feature type="repeat" description="ARM 2">
    <location>
        <begin position="75"/>
        <end position="114"/>
    </location>
</feature>
<feature type="repeat" description="ARM 3">
    <location>
        <begin position="118"/>
        <end position="159"/>
    </location>
</feature>
<feature type="repeat" description="ARM 4">
    <location>
        <begin position="162"/>
        <end position="203"/>
    </location>
</feature>
<feature type="repeat" description="ARM 5">
    <location>
        <begin position="209"/>
        <end position="249"/>
    </location>
</feature>
<reference key="1">
    <citation type="journal article" date="2004" name="Nature">
        <title>Genome evolution in yeasts.</title>
        <authorList>
            <person name="Dujon B."/>
            <person name="Sherman D."/>
            <person name="Fischer G."/>
            <person name="Durrens P."/>
            <person name="Casaregola S."/>
            <person name="Lafontaine I."/>
            <person name="de Montigny J."/>
            <person name="Marck C."/>
            <person name="Neuveglise C."/>
            <person name="Talla E."/>
            <person name="Goffard N."/>
            <person name="Frangeul L."/>
            <person name="Aigle M."/>
            <person name="Anthouard V."/>
            <person name="Babour A."/>
            <person name="Barbe V."/>
            <person name="Barnay S."/>
            <person name="Blanchin S."/>
            <person name="Beckerich J.-M."/>
            <person name="Beyne E."/>
            <person name="Bleykasten C."/>
            <person name="Boisrame A."/>
            <person name="Boyer J."/>
            <person name="Cattolico L."/>
            <person name="Confanioleri F."/>
            <person name="de Daruvar A."/>
            <person name="Despons L."/>
            <person name="Fabre E."/>
            <person name="Fairhead C."/>
            <person name="Ferry-Dumazet H."/>
            <person name="Groppi A."/>
            <person name="Hantraye F."/>
            <person name="Hennequin C."/>
            <person name="Jauniaux N."/>
            <person name="Joyet P."/>
            <person name="Kachouri R."/>
            <person name="Kerrest A."/>
            <person name="Koszul R."/>
            <person name="Lemaire M."/>
            <person name="Lesur I."/>
            <person name="Ma L."/>
            <person name="Muller H."/>
            <person name="Nicaud J.-M."/>
            <person name="Nikolski M."/>
            <person name="Oztas S."/>
            <person name="Ozier-Kalogeropoulos O."/>
            <person name="Pellenz S."/>
            <person name="Potier S."/>
            <person name="Richard G.-F."/>
            <person name="Straub M.-L."/>
            <person name="Suleau A."/>
            <person name="Swennen D."/>
            <person name="Tekaia F."/>
            <person name="Wesolowski-Louvel M."/>
            <person name="Westhof E."/>
            <person name="Wirth B."/>
            <person name="Zeniou-Meyer M."/>
            <person name="Zivanovic Y."/>
            <person name="Bolotin-Fukuhara M."/>
            <person name="Thierry A."/>
            <person name="Bouchier C."/>
            <person name="Caudron B."/>
            <person name="Scarpelli C."/>
            <person name="Gaillardin C."/>
            <person name="Weissenbach J."/>
            <person name="Wincker P."/>
            <person name="Souciet J.-L."/>
        </authorList>
    </citation>
    <scope>NUCLEOTIDE SEQUENCE [LARGE SCALE GENOMIC DNA]</scope>
    <source>
        <strain>ATCC 8585 / CBS 2359 / DSM 70799 / NBRC 1267 / NRRL Y-1140 / WM37</strain>
    </source>
</reference>
<gene>
    <name type="primary">FES1</name>
    <name type="ordered locus">KLLA0E11341g</name>
</gene>
<dbReference type="EMBL" id="CR382125">
    <property type="protein sequence ID" value="CAG99549.1"/>
    <property type="molecule type" value="Genomic_DNA"/>
</dbReference>
<dbReference type="RefSeq" id="XP_454462.1">
    <property type="nucleotide sequence ID" value="XM_454462.1"/>
</dbReference>
<dbReference type="SMR" id="Q6CNM7"/>
<dbReference type="FunCoup" id="Q6CNM7">
    <property type="interactions" value="238"/>
</dbReference>
<dbReference type="STRING" id="284590.Q6CNM7"/>
<dbReference type="PaxDb" id="284590-Q6CNM7"/>
<dbReference type="KEGG" id="kla:KLLA0_E11375g"/>
<dbReference type="eggNOG" id="KOG2160">
    <property type="taxonomic scope" value="Eukaryota"/>
</dbReference>
<dbReference type="HOGENOM" id="CLU_046722_1_0_1"/>
<dbReference type="InParanoid" id="Q6CNM7"/>
<dbReference type="OMA" id="LHWSIAN"/>
<dbReference type="Proteomes" id="UP000000598">
    <property type="component" value="Chromosome E"/>
</dbReference>
<dbReference type="GO" id="GO:0005783">
    <property type="term" value="C:endoplasmic reticulum"/>
    <property type="evidence" value="ECO:0007669"/>
    <property type="project" value="TreeGrafter"/>
</dbReference>
<dbReference type="GO" id="GO:0000774">
    <property type="term" value="F:adenyl-nucleotide exchange factor activity"/>
    <property type="evidence" value="ECO:0007669"/>
    <property type="project" value="TreeGrafter"/>
</dbReference>
<dbReference type="GO" id="GO:0006417">
    <property type="term" value="P:regulation of translation"/>
    <property type="evidence" value="ECO:0007669"/>
    <property type="project" value="UniProtKB-KW"/>
</dbReference>
<dbReference type="Gene3D" id="1.25.10.10">
    <property type="entry name" value="Leucine-rich Repeat Variant"/>
    <property type="match status" value="1"/>
</dbReference>
<dbReference type="InterPro" id="IPR011989">
    <property type="entry name" value="ARM-like"/>
</dbReference>
<dbReference type="InterPro" id="IPR016024">
    <property type="entry name" value="ARM-type_fold"/>
</dbReference>
<dbReference type="InterPro" id="IPR050693">
    <property type="entry name" value="Hsp70_NEF-Inhibitors"/>
</dbReference>
<dbReference type="InterPro" id="IPR013918">
    <property type="entry name" value="Nucleotide_exch_fac_Fes1"/>
</dbReference>
<dbReference type="PANTHER" id="PTHR19316:SF18">
    <property type="entry name" value="HSP70-BINDING PROTEIN 1"/>
    <property type="match status" value="1"/>
</dbReference>
<dbReference type="PANTHER" id="PTHR19316">
    <property type="entry name" value="PROTEIN FOLDING REGULATOR"/>
    <property type="match status" value="1"/>
</dbReference>
<dbReference type="Pfam" id="PF08609">
    <property type="entry name" value="Fes1"/>
    <property type="match status" value="1"/>
</dbReference>
<dbReference type="SUPFAM" id="SSF48371">
    <property type="entry name" value="ARM repeat"/>
    <property type="match status" value="1"/>
</dbReference>
<sequence length="289" mass="32375">MEKLLHWSIANAQGDDEAKARAGQPDPKLLEQLFGGGPDEPTLMKHAMAVISNPEATLENKLVAFDNFEMLIENLDNANNIENMKLWEPLITVLDDPEPELRAFALSVTGTAVQNNDQSQNNFAKYDGALAKVIKLASGRAEDAQVRTKAFYTLSNLIRHNKLIYDQFNQLNGLQIIAPVLKDANASEKLKLRAMALLSTVLTVADMNADFFALLRAYNIIETTLEFLHPECNLYLIDRVLNFFSQLINVGFEFSATELEKLKVGVKNIEPVEAQLNEDDYKTVQYVSK</sequence>
<organism>
    <name type="scientific">Kluyveromyces lactis (strain ATCC 8585 / CBS 2359 / DSM 70799 / NBRC 1267 / NRRL Y-1140 / WM37)</name>
    <name type="common">Yeast</name>
    <name type="synonym">Candida sphaerica</name>
    <dbReference type="NCBI Taxonomy" id="284590"/>
    <lineage>
        <taxon>Eukaryota</taxon>
        <taxon>Fungi</taxon>
        <taxon>Dikarya</taxon>
        <taxon>Ascomycota</taxon>
        <taxon>Saccharomycotina</taxon>
        <taxon>Saccharomycetes</taxon>
        <taxon>Saccharomycetales</taxon>
        <taxon>Saccharomycetaceae</taxon>
        <taxon>Kluyveromyces</taxon>
    </lineage>
</organism>
<accession>Q6CNM7</accession>
<keyword id="KW-0963">Cytoplasm</keyword>
<keyword id="KW-1185">Reference proteome</keyword>
<keyword id="KW-0677">Repeat</keyword>
<keyword id="KW-0810">Translation regulation</keyword>